<proteinExistence type="evidence at transcript level"/>
<accession>P14163</accession>
<name>HAPP_PHYPO</name>
<reference key="1">
    <citation type="journal article" date="1988" name="J. Bacteriol.">
        <title>Selective gene expression during sporulation of Physarum polycephalum.</title>
        <authorList>
            <person name="Martel R."/>
            <person name="Tessier A."/>
            <person name="Pallotta D."/>
            <person name="Lemieux G."/>
        </authorList>
    </citation>
    <scope>NUCLEOTIDE SEQUENCE [MRNA]</scope>
</reference>
<feature type="signal peptide" evidence="1">
    <location>
        <begin position="1"/>
        <end position="18"/>
    </location>
</feature>
<feature type="chain" id="PRO_0000021396" description="Plasmodium-specific hydrophobic abundant protein">
    <location>
        <begin position="19"/>
        <end position="187"/>
    </location>
</feature>
<protein>
    <recommendedName>
        <fullName>Plasmodium-specific hydrophobic abundant protein</fullName>
    </recommendedName>
    <alternativeName>
        <fullName>HAP-P</fullName>
    </alternativeName>
</protein>
<organism>
    <name type="scientific">Physarum polycephalum</name>
    <name type="common">Slime mold</name>
    <dbReference type="NCBI Taxonomy" id="5791"/>
    <lineage>
        <taxon>Eukaryota</taxon>
        <taxon>Amoebozoa</taxon>
        <taxon>Evosea</taxon>
        <taxon>Eumycetozoa</taxon>
        <taxon>Myxogastria</taxon>
        <taxon>Myxogastromycetidae</taxon>
        <taxon>Physariida</taxon>
        <taxon>Physaraceae</taxon>
        <taxon>Physarum</taxon>
    </lineage>
</organism>
<comment type="subcellular location">
    <subcellularLocation>
        <location>Membrane</location>
    </subcellularLocation>
</comment>
<comment type="similarity">
    <text evidence="2">To HAP-S protein.</text>
</comment>
<keyword id="KW-0472">Membrane</keyword>
<keyword id="KW-0732">Signal</keyword>
<sequence>MMKYVFVALCLFAVVALATEVEQKESNTRVARLNVGGLVGCVVALVANIVGGLLRVIIGLVVTLSGVLQIVVGTVLGLVATVASLALDVVGSTVGGILNSLLGLGAILSLVEEVLHVLLSQALLTGLVNAIFALPLSLLVALSTLTDALASAACDCGASATGAGSSLAGCIAGPNGLLFTVGAGASV</sequence>
<dbReference type="EMBL" id="M22242">
    <property type="protein sequence ID" value="AAA29976.1"/>
    <property type="molecule type" value="mRNA"/>
</dbReference>
<dbReference type="GO" id="GO:0016020">
    <property type="term" value="C:membrane"/>
    <property type="evidence" value="ECO:0007669"/>
    <property type="project" value="UniProtKB-SubCell"/>
</dbReference>
<dbReference type="InterPro" id="IPR005566">
    <property type="entry name" value="HAP"/>
</dbReference>
<dbReference type="Pfam" id="PF03866">
    <property type="entry name" value="HAP"/>
    <property type="match status" value="1"/>
</dbReference>
<dbReference type="PIRSF" id="PIRSF022393">
    <property type="entry name" value="HAP"/>
    <property type="match status" value="1"/>
</dbReference>
<evidence type="ECO:0000255" key="1"/>
<evidence type="ECO:0000305" key="2"/>